<proteinExistence type="inferred from homology"/>
<name>AVLB9_WHEAT</name>
<reference key="1">
    <citation type="submission" date="2010-03" db="EMBL/GenBank/DDBJ databases">
        <title>Effect of avenin-like genes on gluten elasticity of wheat.</title>
        <authorList>
            <person name="Wang H.W."/>
            <person name="Ma F.Y."/>
            <person name="Wang Y.S."/>
            <person name="He G.Y."/>
        </authorList>
    </citation>
    <scope>NUCLEOTIDE SEQUENCE [GENOMIC DNA]</scope>
</reference>
<keyword id="KW-1015">Disulfide bond</keyword>
<keyword id="KW-1185">Reference proteome</keyword>
<keyword id="KW-0708">Seed storage protein</keyword>
<keyword id="KW-0732">Signal</keyword>
<keyword id="KW-0758">Storage protein</keyword>
<protein>
    <recommendedName>
        <fullName>Avenin-like b9</fullName>
    </recommendedName>
</protein>
<evidence type="ECO:0000250" key="1"/>
<evidence type="ECO:0000255" key="2"/>
<evidence type="ECO:0000305" key="3"/>
<dbReference type="EMBL" id="HM027634">
    <property type="protein sequence ID" value="ADG45756.1"/>
    <property type="molecule type" value="Genomic_DNA"/>
</dbReference>
<dbReference type="SMR" id="D6QZM4"/>
<dbReference type="Proteomes" id="UP000019116">
    <property type="component" value="Unplaced"/>
</dbReference>
<dbReference type="ExpressionAtlas" id="D6QZM4">
    <property type="expression patterns" value="baseline and differential"/>
</dbReference>
<dbReference type="GO" id="GO:0045735">
    <property type="term" value="F:nutrient reservoir activity"/>
    <property type="evidence" value="ECO:0007669"/>
    <property type="project" value="UniProtKB-KW"/>
</dbReference>
<dbReference type="CDD" id="cd00261">
    <property type="entry name" value="AAI_SS"/>
    <property type="match status" value="2"/>
</dbReference>
<dbReference type="Gene3D" id="1.10.110.10">
    <property type="entry name" value="Plant lipid-transfer and hydrophobic proteins"/>
    <property type="match status" value="2"/>
</dbReference>
<dbReference type="InterPro" id="IPR036312">
    <property type="entry name" value="Bifun_inhib/LTP/seed_sf"/>
</dbReference>
<dbReference type="InterPro" id="IPR016140">
    <property type="entry name" value="Bifunc_inhib/LTP/seed_store"/>
</dbReference>
<dbReference type="InterPro" id="IPR001954">
    <property type="entry name" value="Glia_glutenin"/>
</dbReference>
<dbReference type="PANTHER" id="PTHR33454:SF11">
    <property type="entry name" value="AVENIN-LIKE B5"/>
    <property type="match status" value="1"/>
</dbReference>
<dbReference type="PANTHER" id="PTHR33454">
    <property type="entry name" value="PROLAMIN PPROL 14P"/>
    <property type="match status" value="1"/>
</dbReference>
<dbReference type="Pfam" id="PF13016">
    <property type="entry name" value="Gliadin"/>
    <property type="match status" value="2"/>
</dbReference>
<dbReference type="PRINTS" id="PR00208">
    <property type="entry name" value="GLIADGLUTEN"/>
</dbReference>
<dbReference type="PRINTS" id="PR00209">
    <property type="entry name" value="GLIADIN"/>
</dbReference>
<dbReference type="SMART" id="SM00499">
    <property type="entry name" value="AAI"/>
    <property type="match status" value="2"/>
</dbReference>
<dbReference type="SUPFAM" id="SSF47699">
    <property type="entry name" value="Bifunctional inhibitor/lipid-transfer protein/seed storage 2S albumin"/>
    <property type="match status" value="2"/>
</dbReference>
<comment type="function">
    <text evidence="1">Seed storage protein. Might be integrated via inter-chain disulfide bonds within the glutenin polymer (By similarity).</text>
</comment>
<comment type="PTM">
    <text evidence="3">Contains disulfide bonds.</text>
</comment>
<comment type="similarity">
    <text evidence="3">Belongs to the prolamin family.</text>
</comment>
<organism>
    <name type="scientific">Triticum aestivum</name>
    <name type="common">Wheat</name>
    <dbReference type="NCBI Taxonomy" id="4565"/>
    <lineage>
        <taxon>Eukaryota</taxon>
        <taxon>Viridiplantae</taxon>
        <taxon>Streptophyta</taxon>
        <taxon>Embryophyta</taxon>
        <taxon>Tracheophyta</taxon>
        <taxon>Spermatophyta</taxon>
        <taxon>Magnoliopsida</taxon>
        <taxon>Liliopsida</taxon>
        <taxon>Poales</taxon>
        <taxon>Poaceae</taxon>
        <taxon>BOP clade</taxon>
        <taxon>Pooideae</taxon>
        <taxon>Triticodae</taxon>
        <taxon>Triticeae</taxon>
        <taxon>Triticinae</taxon>
        <taxon>Triticum</taxon>
    </lineage>
</organism>
<sequence>MKVFILALLALAATTAIAQLETTCSQGFGQSQQQQQPGQRQLLEQMKPCVAFLQQKCSPLRMPFLQTQVEQLSSCQIVQYQCCQQLAQIPERTRCHAIHIVVEAIIQQQSQQQWQEPQQQAQHKSMRMLLENLSLMCNIYVPVQCQQQQQLGQQQQQQLQEQLTPCTTFLQQQCSPVTVPFPQIPVDQPTSCQNVQYQCCRQLSQIPEQFRCQAIHNVAEAIRQQQPQQQWQGMYQPQQPAQLESIRMSLQALRSMCSIYIPVQCPAPTTYNIPLVATYTGGAC</sequence>
<accession>D6QZM4</accession>
<feature type="signal peptide" evidence="2">
    <location>
        <begin position="1"/>
        <end position="18"/>
    </location>
</feature>
<feature type="chain" id="PRO_0000410690" description="Avenin-like b9">
    <location>
        <begin position="19"/>
        <end position="284"/>
    </location>
</feature>